<organism>
    <name type="scientific">Pseudomonas syringae pv. syringae (strain B728a)</name>
    <dbReference type="NCBI Taxonomy" id="205918"/>
    <lineage>
        <taxon>Bacteria</taxon>
        <taxon>Pseudomonadati</taxon>
        <taxon>Pseudomonadota</taxon>
        <taxon>Gammaproteobacteria</taxon>
        <taxon>Pseudomonadales</taxon>
        <taxon>Pseudomonadaceae</taxon>
        <taxon>Pseudomonas</taxon>
        <taxon>Pseudomonas syringae</taxon>
    </lineage>
</organism>
<protein>
    <recommendedName>
        <fullName evidence="1">Oligoribonuclease</fullName>
        <ecNumber evidence="1">3.1.15.-</ecNumber>
    </recommendedName>
</protein>
<comment type="function">
    <text evidence="1">3'-to-5' exoribonuclease specific for small oligoribonucleotides.</text>
</comment>
<comment type="subcellular location">
    <subcellularLocation>
        <location evidence="1">Cytoplasm</location>
    </subcellularLocation>
</comment>
<comment type="similarity">
    <text evidence="1">Belongs to the oligoribonuclease family.</text>
</comment>
<sequence>MQNKQNLIWIDLEMTGLDPDTDVIIEMATIITDSELNTLAEGPVIAVHQSDETLAKMDEWNTRQHGGSGLTQRVRESTVSMAEAEAQTLEFIKLWVPERSSPICGNSICQDRRFLYRHMPTLENWFHYRNLDVSTLKELAARWSPELKFKKGSTHLALDDIRESIAELRFYREHFIKP</sequence>
<feature type="chain" id="PRO_1000004278" description="Oligoribonuclease">
    <location>
        <begin position="1"/>
        <end position="178"/>
    </location>
</feature>
<feature type="domain" description="Exonuclease" evidence="1">
    <location>
        <begin position="7"/>
        <end position="168"/>
    </location>
</feature>
<feature type="active site" evidence="1">
    <location>
        <position position="128"/>
    </location>
</feature>
<proteinExistence type="inferred from homology"/>
<dbReference type="EC" id="3.1.15.-" evidence="1"/>
<dbReference type="EMBL" id="CP000075">
    <property type="protein sequence ID" value="AAY35634.1"/>
    <property type="molecule type" value="Genomic_DNA"/>
</dbReference>
<dbReference type="RefSeq" id="WP_003402903.1">
    <property type="nucleotide sequence ID" value="NC_007005.1"/>
</dbReference>
<dbReference type="RefSeq" id="YP_233672.1">
    <property type="nucleotide sequence ID" value="NC_007005.1"/>
</dbReference>
<dbReference type="SMR" id="Q4ZYY8"/>
<dbReference type="STRING" id="205918.Psyr_0564"/>
<dbReference type="KEGG" id="psb:Psyr_0564"/>
<dbReference type="PATRIC" id="fig|205918.7.peg.587"/>
<dbReference type="eggNOG" id="COG1949">
    <property type="taxonomic scope" value="Bacteria"/>
</dbReference>
<dbReference type="HOGENOM" id="CLU_064761_2_0_6"/>
<dbReference type="OrthoDB" id="9801329at2"/>
<dbReference type="Proteomes" id="UP000000426">
    <property type="component" value="Chromosome"/>
</dbReference>
<dbReference type="GO" id="GO:0005737">
    <property type="term" value="C:cytoplasm"/>
    <property type="evidence" value="ECO:0007669"/>
    <property type="project" value="UniProtKB-SubCell"/>
</dbReference>
<dbReference type="GO" id="GO:0000175">
    <property type="term" value="F:3'-5'-RNA exonuclease activity"/>
    <property type="evidence" value="ECO:0007669"/>
    <property type="project" value="InterPro"/>
</dbReference>
<dbReference type="GO" id="GO:0003676">
    <property type="term" value="F:nucleic acid binding"/>
    <property type="evidence" value="ECO:0007669"/>
    <property type="project" value="InterPro"/>
</dbReference>
<dbReference type="GO" id="GO:0006259">
    <property type="term" value="P:DNA metabolic process"/>
    <property type="evidence" value="ECO:0007669"/>
    <property type="project" value="UniProtKB-ARBA"/>
</dbReference>
<dbReference type="CDD" id="cd06135">
    <property type="entry name" value="Orn"/>
    <property type="match status" value="1"/>
</dbReference>
<dbReference type="FunFam" id="3.30.420.10:FF:000003">
    <property type="entry name" value="Oligoribonuclease"/>
    <property type="match status" value="1"/>
</dbReference>
<dbReference type="Gene3D" id="3.30.420.10">
    <property type="entry name" value="Ribonuclease H-like superfamily/Ribonuclease H"/>
    <property type="match status" value="1"/>
</dbReference>
<dbReference type="HAMAP" id="MF_00045">
    <property type="entry name" value="Oligoribonuclease"/>
    <property type="match status" value="1"/>
</dbReference>
<dbReference type="InterPro" id="IPR013520">
    <property type="entry name" value="Exonuclease_RNaseT/DNA_pol3"/>
</dbReference>
<dbReference type="InterPro" id="IPR022894">
    <property type="entry name" value="Oligoribonuclease"/>
</dbReference>
<dbReference type="InterPro" id="IPR012337">
    <property type="entry name" value="RNaseH-like_sf"/>
</dbReference>
<dbReference type="InterPro" id="IPR036397">
    <property type="entry name" value="RNaseH_sf"/>
</dbReference>
<dbReference type="NCBIfam" id="NF003765">
    <property type="entry name" value="PRK05359.1"/>
    <property type="match status" value="1"/>
</dbReference>
<dbReference type="PANTHER" id="PTHR11046">
    <property type="entry name" value="OLIGORIBONUCLEASE, MITOCHONDRIAL"/>
    <property type="match status" value="1"/>
</dbReference>
<dbReference type="PANTHER" id="PTHR11046:SF0">
    <property type="entry name" value="OLIGORIBONUCLEASE, MITOCHONDRIAL"/>
    <property type="match status" value="1"/>
</dbReference>
<dbReference type="Pfam" id="PF00929">
    <property type="entry name" value="RNase_T"/>
    <property type="match status" value="1"/>
</dbReference>
<dbReference type="SMART" id="SM00479">
    <property type="entry name" value="EXOIII"/>
    <property type="match status" value="1"/>
</dbReference>
<dbReference type="SUPFAM" id="SSF53098">
    <property type="entry name" value="Ribonuclease H-like"/>
    <property type="match status" value="1"/>
</dbReference>
<gene>
    <name evidence="1" type="primary">orn</name>
    <name type="ordered locus">Psyr_0564</name>
</gene>
<name>ORN_PSEU2</name>
<reference key="1">
    <citation type="journal article" date="2005" name="Proc. Natl. Acad. Sci. U.S.A.">
        <title>Comparison of the complete genome sequences of Pseudomonas syringae pv. syringae B728a and pv. tomato DC3000.</title>
        <authorList>
            <person name="Feil H."/>
            <person name="Feil W.S."/>
            <person name="Chain P."/>
            <person name="Larimer F."/>
            <person name="Dibartolo G."/>
            <person name="Copeland A."/>
            <person name="Lykidis A."/>
            <person name="Trong S."/>
            <person name="Nolan M."/>
            <person name="Goltsman E."/>
            <person name="Thiel J."/>
            <person name="Malfatti S."/>
            <person name="Loper J.E."/>
            <person name="Lapidus A."/>
            <person name="Detter J.C."/>
            <person name="Land M."/>
            <person name="Richardson P.M."/>
            <person name="Kyrpides N.C."/>
            <person name="Ivanova N."/>
            <person name="Lindow S.E."/>
        </authorList>
    </citation>
    <scope>NUCLEOTIDE SEQUENCE [LARGE SCALE GENOMIC DNA]</scope>
    <source>
        <strain>B728a</strain>
    </source>
</reference>
<evidence type="ECO:0000255" key="1">
    <source>
        <dbReference type="HAMAP-Rule" id="MF_00045"/>
    </source>
</evidence>
<keyword id="KW-0963">Cytoplasm</keyword>
<keyword id="KW-0269">Exonuclease</keyword>
<keyword id="KW-0378">Hydrolase</keyword>
<keyword id="KW-0540">Nuclease</keyword>
<accession>Q4ZYY8</accession>